<reference key="1">
    <citation type="journal article" date="1995" name="Science">
        <title>Whole-genome random sequencing and assembly of Haemophilus influenzae Rd.</title>
        <authorList>
            <person name="Fleischmann R.D."/>
            <person name="Adams M.D."/>
            <person name="White O."/>
            <person name="Clayton R.A."/>
            <person name="Kirkness E.F."/>
            <person name="Kerlavage A.R."/>
            <person name="Bult C.J."/>
            <person name="Tomb J.-F."/>
            <person name="Dougherty B.A."/>
            <person name="Merrick J.M."/>
            <person name="McKenney K."/>
            <person name="Sutton G.G."/>
            <person name="FitzHugh W."/>
            <person name="Fields C.A."/>
            <person name="Gocayne J.D."/>
            <person name="Scott J.D."/>
            <person name="Shirley R."/>
            <person name="Liu L.-I."/>
            <person name="Glodek A."/>
            <person name="Kelley J.M."/>
            <person name="Weidman J.F."/>
            <person name="Phillips C.A."/>
            <person name="Spriggs T."/>
            <person name="Hedblom E."/>
            <person name="Cotton M.D."/>
            <person name="Utterback T.R."/>
            <person name="Hanna M.C."/>
            <person name="Nguyen D.T."/>
            <person name="Saudek D.M."/>
            <person name="Brandon R.C."/>
            <person name="Fine L.D."/>
            <person name="Fritchman J.L."/>
            <person name="Fuhrmann J.L."/>
            <person name="Geoghagen N.S.M."/>
            <person name="Gnehm C.L."/>
            <person name="McDonald L.A."/>
            <person name="Small K.V."/>
            <person name="Fraser C.M."/>
            <person name="Smith H.O."/>
            <person name="Venter J.C."/>
        </authorList>
    </citation>
    <scope>NUCLEOTIDE SEQUENCE [LARGE SCALE GENOMIC DNA]</scope>
    <source>
        <strain>ATCC 51907 / DSM 11121 / KW20 / Rd</strain>
    </source>
</reference>
<gene>
    <name evidence="1" type="primary">thyA</name>
    <name type="ordered locus">HI_0905</name>
</gene>
<keyword id="KW-0963">Cytoplasm</keyword>
<keyword id="KW-0489">Methyltransferase</keyword>
<keyword id="KW-0545">Nucleotide biosynthesis</keyword>
<keyword id="KW-1185">Reference proteome</keyword>
<keyword id="KW-0808">Transferase</keyword>
<sequence>MKQYLELCRRIVSEGEWVANERTGKHCLTVINADLEYDVANNQFPLITTRKSYWKAAIAEFLGYIRGYDNAADFRALGTKTWDANANENAAWLANPHRRGVDDMGRVYGVQGRAWRKPNGETIDQLRKIVNNLTKGIDDRGEILTFFNPGEFDLGCLRPCMHTHTFSLVGDTLHLTSYQRSCDVPLGLNFNQIQVFTFLALMAQITGKKAGKAYHKIVNAHIYEDQLELMRDVQLKREPFPLPKLEINPDIKTLEDLETWVTMDDFKVVGYQSHEPIKYPFSV</sequence>
<proteinExistence type="inferred from homology"/>
<comment type="function">
    <text evidence="1">Catalyzes the reductive methylation of 2'-deoxyuridine-5'-monophosphate (dUMP) to 2'-deoxythymidine-5'-monophosphate (dTMP) while utilizing 5,10-methylenetetrahydrofolate (mTHF) as the methyl donor and reductant in the reaction, yielding dihydrofolate (DHF) as a by-product. This enzymatic reaction provides an intracellular de novo source of dTMP, an essential precursor for DNA biosynthesis.</text>
</comment>
<comment type="catalytic activity">
    <reaction evidence="1">
        <text>dUMP + (6R)-5,10-methylene-5,6,7,8-tetrahydrofolate = 7,8-dihydrofolate + dTMP</text>
        <dbReference type="Rhea" id="RHEA:12104"/>
        <dbReference type="ChEBI" id="CHEBI:15636"/>
        <dbReference type="ChEBI" id="CHEBI:57451"/>
        <dbReference type="ChEBI" id="CHEBI:63528"/>
        <dbReference type="ChEBI" id="CHEBI:246422"/>
        <dbReference type="EC" id="2.1.1.45"/>
    </reaction>
</comment>
<comment type="pathway">
    <text evidence="1">Pyrimidine metabolism; dTTP biosynthesis.</text>
</comment>
<comment type="subunit">
    <text evidence="1">Homodimer.</text>
</comment>
<comment type="subcellular location">
    <subcellularLocation>
        <location evidence="1">Cytoplasm</location>
    </subcellularLocation>
</comment>
<comment type="similarity">
    <text evidence="1">Belongs to the thymidylate synthase family. Bacterial-type ThyA subfamily.</text>
</comment>
<feature type="chain" id="PRO_0000140963" description="Thymidylate synthase">
    <location>
        <begin position="1"/>
        <end position="283"/>
    </location>
</feature>
<feature type="active site" description="Nucleophile" evidence="1">
    <location>
        <position position="160"/>
    </location>
</feature>
<feature type="binding site" evidence="1">
    <location>
        <position position="22"/>
    </location>
    <ligand>
        <name>dUMP</name>
        <dbReference type="ChEBI" id="CHEBI:246422"/>
    </ligand>
</feature>
<feature type="binding site" evidence="1">
    <location>
        <begin position="180"/>
        <end position="183"/>
    </location>
    <ligand>
        <name>dUMP</name>
        <dbReference type="ChEBI" id="CHEBI:246422"/>
    </ligand>
</feature>
<feature type="binding site" evidence="1">
    <location>
        <position position="183"/>
    </location>
    <ligand>
        <name>(6R)-5,10-methylene-5,6,7,8-tetrahydrofolate</name>
        <dbReference type="ChEBI" id="CHEBI:15636"/>
    </ligand>
</feature>
<feature type="binding site" evidence="1">
    <location>
        <position position="191"/>
    </location>
    <ligand>
        <name>dUMP</name>
        <dbReference type="ChEBI" id="CHEBI:246422"/>
    </ligand>
</feature>
<feature type="binding site" evidence="1">
    <location>
        <begin position="221"/>
        <end position="223"/>
    </location>
    <ligand>
        <name>dUMP</name>
        <dbReference type="ChEBI" id="CHEBI:246422"/>
    </ligand>
</feature>
<feature type="binding site" evidence="1">
    <location>
        <position position="282"/>
    </location>
    <ligand>
        <name>(6R)-5,10-methylene-5,6,7,8-tetrahydrofolate</name>
        <dbReference type="ChEBI" id="CHEBI:15636"/>
    </ligand>
</feature>
<name>TYSY_HAEIN</name>
<accession>P44420</accession>
<dbReference type="EC" id="2.1.1.45" evidence="1"/>
<dbReference type="EMBL" id="L42023">
    <property type="protein sequence ID" value="AAC22564.1"/>
    <property type="molecule type" value="Genomic_DNA"/>
</dbReference>
<dbReference type="PIR" id="G64101">
    <property type="entry name" value="G64101"/>
</dbReference>
<dbReference type="RefSeq" id="NP_439065.1">
    <property type="nucleotide sequence ID" value="NC_000907.1"/>
</dbReference>
<dbReference type="SMR" id="P44420"/>
<dbReference type="STRING" id="71421.HI_0905"/>
<dbReference type="EnsemblBacteria" id="AAC22564">
    <property type="protein sequence ID" value="AAC22564"/>
    <property type="gene ID" value="HI_0905"/>
</dbReference>
<dbReference type="KEGG" id="hin:HI_0905"/>
<dbReference type="PATRIC" id="fig|71421.8.peg.946"/>
<dbReference type="eggNOG" id="COG0207">
    <property type="taxonomic scope" value="Bacteria"/>
</dbReference>
<dbReference type="HOGENOM" id="CLU_021669_0_1_6"/>
<dbReference type="OrthoDB" id="9774633at2"/>
<dbReference type="PhylomeDB" id="P44420"/>
<dbReference type="BioCyc" id="HINF71421:G1GJ1-944-MONOMER"/>
<dbReference type="UniPathway" id="UPA00575"/>
<dbReference type="Proteomes" id="UP000000579">
    <property type="component" value="Chromosome"/>
</dbReference>
<dbReference type="GO" id="GO:0005829">
    <property type="term" value="C:cytosol"/>
    <property type="evidence" value="ECO:0000318"/>
    <property type="project" value="GO_Central"/>
</dbReference>
<dbReference type="GO" id="GO:0004799">
    <property type="term" value="F:thymidylate synthase activity"/>
    <property type="evidence" value="ECO:0000318"/>
    <property type="project" value="GO_Central"/>
</dbReference>
<dbReference type="GO" id="GO:0006231">
    <property type="term" value="P:dTMP biosynthetic process"/>
    <property type="evidence" value="ECO:0000318"/>
    <property type="project" value="GO_Central"/>
</dbReference>
<dbReference type="GO" id="GO:0006235">
    <property type="term" value="P:dTTP biosynthetic process"/>
    <property type="evidence" value="ECO:0007669"/>
    <property type="project" value="UniProtKB-UniRule"/>
</dbReference>
<dbReference type="GO" id="GO:0032259">
    <property type="term" value="P:methylation"/>
    <property type="evidence" value="ECO:0007669"/>
    <property type="project" value="UniProtKB-KW"/>
</dbReference>
<dbReference type="CDD" id="cd00351">
    <property type="entry name" value="TS_Pyrimidine_HMase"/>
    <property type="match status" value="1"/>
</dbReference>
<dbReference type="FunFam" id="3.30.572.10:FF:000003">
    <property type="entry name" value="Thymidylate synthase"/>
    <property type="match status" value="1"/>
</dbReference>
<dbReference type="Gene3D" id="3.30.572.10">
    <property type="entry name" value="Thymidylate synthase/dCMP hydroxymethylase domain"/>
    <property type="match status" value="1"/>
</dbReference>
<dbReference type="HAMAP" id="MF_00008">
    <property type="entry name" value="Thymidy_synth_bact"/>
    <property type="match status" value="1"/>
</dbReference>
<dbReference type="InterPro" id="IPR045097">
    <property type="entry name" value="Thymidate_synth/dCMP_Mease"/>
</dbReference>
<dbReference type="InterPro" id="IPR023451">
    <property type="entry name" value="Thymidate_synth/dCMP_Mease_dom"/>
</dbReference>
<dbReference type="InterPro" id="IPR036926">
    <property type="entry name" value="Thymidate_synth/dCMP_Mease_sf"/>
</dbReference>
<dbReference type="InterPro" id="IPR000398">
    <property type="entry name" value="Thymidylate_synthase"/>
</dbReference>
<dbReference type="InterPro" id="IPR020940">
    <property type="entry name" value="Thymidylate_synthase_AS"/>
</dbReference>
<dbReference type="NCBIfam" id="NF002498">
    <property type="entry name" value="PRK01827.1-4"/>
    <property type="match status" value="1"/>
</dbReference>
<dbReference type="NCBIfam" id="TIGR03284">
    <property type="entry name" value="thym_sym"/>
    <property type="match status" value="1"/>
</dbReference>
<dbReference type="PANTHER" id="PTHR11548:SF9">
    <property type="entry name" value="THYMIDYLATE SYNTHASE"/>
    <property type="match status" value="1"/>
</dbReference>
<dbReference type="PANTHER" id="PTHR11548">
    <property type="entry name" value="THYMIDYLATE SYNTHASE 1"/>
    <property type="match status" value="1"/>
</dbReference>
<dbReference type="Pfam" id="PF00303">
    <property type="entry name" value="Thymidylat_synt"/>
    <property type="match status" value="1"/>
</dbReference>
<dbReference type="PRINTS" id="PR00108">
    <property type="entry name" value="THYMDSNTHASE"/>
</dbReference>
<dbReference type="SUPFAM" id="SSF55831">
    <property type="entry name" value="Thymidylate synthase/dCMP hydroxymethylase"/>
    <property type="match status" value="1"/>
</dbReference>
<dbReference type="PROSITE" id="PS00091">
    <property type="entry name" value="THYMIDYLATE_SYNTHASE"/>
    <property type="match status" value="1"/>
</dbReference>
<organism>
    <name type="scientific">Haemophilus influenzae (strain ATCC 51907 / DSM 11121 / KW20 / Rd)</name>
    <dbReference type="NCBI Taxonomy" id="71421"/>
    <lineage>
        <taxon>Bacteria</taxon>
        <taxon>Pseudomonadati</taxon>
        <taxon>Pseudomonadota</taxon>
        <taxon>Gammaproteobacteria</taxon>
        <taxon>Pasteurellales</taxon>
        <taxon>Pasteurellaceae</taxon>
        <taxon>Haemophilus</taxon>
    </lineage>
</organism>
<evidence type="ECO:0000255" key="1">
    <source>
        <dbReference type="HAMAP-Rule" id="MF_00008"/>
    </source>
</evidence>
<protein>
    <recommendedName>
        <fullName evidence="1">Thymidylate synthase</fullName>
        <shortName evidence="1">TS</shortName>
        <shortName evidence="1">TSase</shortName>
        <ecNumber evidence="1">2.1.1.45</ecNumber>
    </recommendedName>
</protein>